<accession>Q7WLL3</accession>
<comment type="function">
    <text evidence="1">Hydrolyzes the pyrophosphate bond of UDP-2,3-diacylglucosamine to yield 2,3-diacylglucosamine 1-phosphate (lipid X) and UMP by catalyzing the attack of water at the alpha-P atom. Involved in the biosynthesis of lipid A, a phosphorylated glycolipid that anchors the lipopolysaccharide to the outer membrane of the cell.</text>
</comment>
<comment type="catalytic activity">
    <reaction evidence="1">
        <text>UDP-2-N,3-O-bis[(3R)-3-hydroxytetradecanoyl]-alpha-D-glucosamine + H2O = 2-N,3-O-bis[(3R)-3-hydroxytetradecanoyl]-alpha-D-glucosaminyl 1-phosphate + UMP + 2 H(+)</text>
        <dbReference type="Rhea" id="RHEA:25213"/>
        <dbReference type="ChEBI" id="CHEBI:15377"/>
        <dbReference type="ChEBI" id="CHEBI:15378"/>
        <dbReference type="ChEBI" id="CHEBI:57865"/>
        <dbReference type="ChEBI" id="CHEBI:57957"/>
        <dbReference type="ChEBI" id="CHEBI:78847"/>
        <dbReference type="EC" id="3.6.1.54"/>
    </reaction>
</comment>
<comment type="cofactor">
    <cofactor evidence="1">
        <name>Mn(2+)</name>
        <dbReference type="ChEBI" id="CHEBI:29035"/>
    </cofactor>
    <text evidence="1">Binds 2 Mn(2+) ions per subunit in a binuclear metal center.</text>
</comment>
<comment type="pathway">
    <text evidence="1">Glycolipid biosynthesis; lipid IV(A) biosynthesis; lipid IV(A) from (3R)-3-hydroxytetradecanoyl-[acyl-carrier-protein] and UDP-N-acetyl-alpha-D-glucosamine: step 4/6.</text>
</comment>
<comment type="subcellular location">
    <subcellularLocation>
        <location evidence="1">Cell inner membrane</location>
        <topology evidence="1">Peripheral membrane protein</topology>
        <orientation evidence="1">Cytoplasmic side</orientation>
    </subcellularLocation>
</comment>
<comment type="similarity">
    <text evidence="1">Belongs to the LpxH family.</text>
</comment>
<name>LPXH_BORBR</name>
<dbReference type="EC" id="3.6.1.54" evidence="1"/>
<dbReference type="EMBL" id="BX640442">
    <property type="protein sequence ID" value="CAE32229.1"/>
    <property type="molecule type" value="Genomic_DNA"/>
</dbReference>
<dbReference type="RefSeq" id="WP_010926282.1">
    <property type="nucleotide sequence ID" value="NC_002927.3"/>
</dbReference>
<dbReference type="SMR" id="Q7WLL3"/>
<dbReference type="KEGG" id="bbr:BB1732"/>
<dbReference type="eggNOG" id="COG2908">
    <property type="taxonomic scope" value="Bacteria"/>
</dbReference>
<dbReference type="HOGENOM" id="CLU_074586_0_0_4"/>
<dbReference type="UniPathway" id="UPA00359">
    <property type="reaction ID" value="UER00480"/>
</dbReference>
<dbReference type="Proteomes" id="UP000001027">
    <property type="component" value="Chromosome"/>
</dbReference>
<dbReference type="GO" id="GO:0005737">
    <property type="term" value="C:cytoplasm"/>
    <property type="evidence" value="ECO:0007669"/>
    <property type="project" value="InterPro"/>
</dbReference>
<dbReference type="GO" id="GO:0019897">
    <property type="term" value="C:extrinsic component of plasma membrane"/>
    <property type="evidence" value="ECO:0007669"/>
    <property type="project" value="UniProtKB-UniRule"/>
</dbReference>
<dbReference type="GO" id="GO:0030145">
    <property type="term" value="F:manganese ion binding"/>
    <property type="evidence" value="ECO:0007669"/>
    <property type="project" value="UniProtKB-UniRule"/>
</dbReference>
<dbReference type="GO" id="GO:0008758">
    <property type="term" value="F:UDP-2,3-diacylglucosamine hydrolase activity"/>
    <property type="evidence" value="ECO:0007669"/>
    <property type="project" value="UniProtKB-UniRule"/>
</dbReference>
<dbReference type="GO" id="GO:0009245">
    <property type="term" value="P:lipid A biosynthetic process"/>
    <property type="evidence" value="ECO:0007669"/>
    <property type="project" value="UniProtKB-UniRule"/>
</dbReference>
<dbReference type="CDD" id="cd07398">
    <property type="entry name" value="MPP_YbbF-LpxH"/>
    <property type="match status" value="1"/>
</dbReference>
<dbReference type="Gene3D" id="3.60.21.10">
    <property type="match status" value="1"/>
</dbReference>
<dbReference type="HAMAP" id="MF_00575">
    <property type="entry name" value="LpxH"/>
    <property type="match status" value="1"/>
</dbReference>
<dbReference type="InterPro" id="IPR004843">
    <property type="entry name" value="Calcineurin-like_PHP_ApaH"/>
</dbReference>
<dbReference type="InterPro" id="IPR043461">
    <property type="entry name" value="LpxH-like"/>
</dbReference>
<dbReference type="InterPro" id="IPR029052">
    <property type="entry name" value="Metallo-depent_PP-like"/>
</dbReference>
<dbReference type="InterPro" id="IPR010138">
    <property type="entry name" value="UDP-diacylglucosamine_Hdrlase"/>
</dbReference>
<dbReference type="NCBIfam" id="TIGR01854">
    <property type="entry name" value="lipid_A_lpxH"/>
    <property type="match status" value="1"/>
</dbReference>
<dbReference type="NCBIfam" id="NF003743">
    <property type="entry name" value="PRK05340.1"/>
    <property type="match status" value="1"/>
</dbReference>
<dbReference type="PANTHER" id="PTHR34990:SF1">
    <property type="entry name" value="UDP-2,3-DIACYLGLUCOSAMINE HYDROLASE"/>
    <property type="match status" value="1"/>
</dbReference>
<dbReference type="PANTHER" id="PTHR34990">
    <property type="entry name" value="UDP-2,3-DIACYLGLUCOSAMINE HYDROLASE-RELATED"/>
    <property type="match status" value="1"/>
</dbReference>
<dbReference type="Pfam" id="PF00149">
    <property type="entry name" value="Metallophos"/>
    <property type="match status" value="1"/>
</dbReference>
<dbReference type="SUPFAM" id="SSF56300">
    <property type="entry name" value="Metallo-dependent phosphatases"/>
    <property type="match status" value="1"/>
</dbReference>
<organism>
    <name type="scientific">Bordetella bronchiseptica (strain ATCC BAA-588 / NCTC 13252 / RB50)</name>
    <name type="common">Alcaligenes bronchisepticus</name>
    <dbReference type="NCBI Taxonomy" id="257310"/>
    <lineage>
        <taxon>Bacteria</taxon>
        <taxon>Pseudomonadati</taxon>
        <taxon>Pseudomonadota</taxon>
        <taxon>Betaproteobacteria</taxon>
        <taxon>Burkholderiales</taxon>
        <taxon>Alcaligenaceae</taxon>
        <taxon>Bordetella</taxon>
    </lineage>
</organism>
<feature type="chain" id="PRO_0000214102" description="UDP-2,3-diacylglucosamine hydrolase">
    <location>
        <begin position="1"/>
        <end position="258"/>
    </location>
</feature>
<feature type="binding site" evidence="1">
    <location>
        <position position="15"/>
    </location>
    <ligand>
        <name>Mn(2+)</name>
        <dbReference type="ChEBI" id="CHEBI:29035"/>
        <label>1</label>
    </ligand>
</feature>
<feature type="binding site" evidence="1">
    <location>
        <position position="17"/>
    </location>
    <ligand>
        <name>Mn(2+)</name>
        <dbReference type="ChEBI" id="CHEBI:29035"/>
        <label>1</label>
    </ligand>
</feature>
<feature type="binding site" evidence="1">
    <location>
        <position position="48"/>
    </location>
    <ligand>
        <name>Mn(2+)</name>
        <dbReference type="ChEBI" id="CHEBI:29035"/>
        <label>1</label>
    </ligand>
</feature>
<feature type="binding site" evidence="1">
    <location>
        <position position="48"/>
    </location>
    <ligand>
        <name>Mn(2+)</name>
        <dbReference type="ChEBI" id="CHEBI:29035"/>
        <label>2</label>
    </ligand>
</feature>
<feature type="binding site" evidence="1">
    <location>
        <begin position="88"/>
        <end position="89"/>
    </location>
    <ligand>
        <name>substrate</name>
    </ligand>
</feature>
<feature type="binding site" evidence="1">
    <location>
        <position position="88"/>
    </location>
    <ligand>
        <name>Mn(2+)</name>
        <dbReference type="ChEBI" id="CHEBI:29035"/>
        <label>2</label>
    </ligand>
</feature>
<feature type="binding site" evidence="1">
    <location>
        <position position="123"/>
    </location>
    <ligand>
        <name>Mn(2+)</name>
        <dbReference type="ChEBI" id="CHEBI:29035"/>
        <label>2</label>
    </ligand>
</feature>
<feature type="binding site" evidence="1">
    <location>
        <position position="131"/>
    </location>
    <ligand>
        <name>substrate</name>
    </ligand>
</feature>
<feature type="binding site" evidence="1">
    <location>
        <position position="169"/>
    </location>
    <ligand>
        <name>substrate</name>
    </ligand>
</feature>
<feature type="binding site" evidence="1">
    <location>
        <position position="173"/>
    </location>
    <ligand>
        <name>substrate</name>
    </ligand>
</feature>
<feature type="binding site" evidence="1">
    <location>
        <position position="176"/>
    </location>
    <ligand>
        <name>substrate</name>
    </ligand>
</feature>
<feature type="binding site" evidence="1">
    <location>
        <position position="204"/>
    </location>
    <ligand>
        <name>Mn(2+)</name>
        <dbReference type="ChEBI" id="CHEBI:29035"/>
        <label>2</label>
    </ligand>
</feature>
<feature type="binding site" evidence="1">
    <location>
        <position position="204"/>
    </location>
    <ligand>
        <name>substrate</name>
    </ligand>
</feature>
<feature type="binding site" evidence="1">
    <location>
        <position position="206"/>
    </location>
    <ligand>
        <name>Mn(2+)</name>
        <dbReference type="ChEBI" id="CHEBI:29035"/>
        <label>1</label>
    </ligand>
</feature>
<evidence type="ECO:0000255" key="1">
    <source>
        <dbReference type="HAMAP-Rule" id="MF_00575"/>
    </source>
</evidence>
<sequence>MNKLALQGPLWLASDLHLGPATPATAEAFLGLLQAAADEASALLLPGDIFDAWIGDDVIRAAPPWLAAVLQGIRAAAGRIPVYLGRGNRDFLIGQELADALGAHLLPEPVLLETDYGRILLTHGDEYCTDDSAYQQFRAMVRNPQWQAQFLAMSIPERLAMAEQARGESQAANQAKSMEIMDVNPASVEAALREADVDVLVHGHTHRPARHVLSVDGRKRERWVLPDWDCDHADPPRGGWLVIDRDGLQCFDLVEDED</sequence>
<gene>
    <name evidence="1" type="primary">lpxH</name>
    <name type="ordered locus">BB1732</name>
</gene>
<proteinExistence type="inferred from homology"/>
<reference key="1">
    <citation type="journal article" date="2003" name="Nat. Genet.">
        <title>Comparative analysis of the genome sequences of Bordetella pertussis, Bordetella parapertussis and Bordetella bronchiseptica.</title>
        <authorList>
            <person name="Parkhill J."/>
            <person name="Sebaihia M."/>
            <person name="Preston A."/>
            <person name="Murphy L.D."/>
            <person name="Thomson N.R."/>
            <person name="Harris D.E."/>
            <person name="Holden M.T.G."/>
            <person name="Churcher C.M."/>
            <person name="Bentley S.D."/>
            <person name="Mungall K.L."/>
            <person name="Cerdeno-Tarraga A.-M."/>
            <person name="Temple L."/>
            <person name="James K.D."/>
            <person name="Harris B."/>
            <person name="Quail M.A."/>
            <person name="Achtman M."/>
            <person name="Atkin R."/>
            <person name="Baker S."/>
            <person name="Basham D."/>
            <person name="Bason N."/>
            <person name="Cherevach I."/>
            <person name="Chillingworth T."/>
            <person name="Collins M."/>
            <person name="Cronin A."/>
            <person name="Davis P."/>
            <person name="Doggett J."/>
            <person name="Feltwell T."/>
            <person name="Goble A."/>
            <person name="Hamlin N."/>
            <person name="Hauser H."/>
            <person name="Holroyd S."/>
            <person name="Jagels K."/>
            <person name="Leather S."/>
            <person name="Moule S."/>
            <person name="Norberczak H."/>
            <person name="O'Neil S."/>
            <person name="Ormond D."/>
            <person name="Price C."/>
            <person name="Rabbinowitsch E."/>
            <person name="Rutter S."/>
            <person name="Sanders M."/>
            <person name="Saunders D."/>
            <person name="Seeger K."/>
            <person name="Sharp S."/>
            <person name="Simmonds M."/>
            <person name="Skelton J."/>
            <person name="Squares R."/>
            <person name="Squares S."/>
            <person name="Stevens K."/>
            <person name="Unwin L."/>
            <person name="Whitehead S."/>
            <person name="Barrell B.G."/>
            <person name="Maskell D.J."/>
        </authorList>
    </citation>
    <scope>NUCLEOTIDE SEQUENCE [LARGE SCALE GENOMIC DNA]</scope>
    <source>
        <strain>ATCC BAA-588 / NCTC 13252 / RB50</strain>
    </source>
</reference>
<keyword id="KW-0997">Cell inner membrane</keyword>
<keyword id="KW-1003">Cell membrane</keyword>
<keyword id="KW-0378">Hydrolase</keyword>
<keyword id="KW-0441">Lipid A biosynthesis</keyword>
<keyword id="KW-0444">Lipid biosynthesis</keyword>
<keyword id="KW-0443">Lipid metabolism</keyword>
<keyword id="KW-0464">Manganese</keyword>
<keyword id="KW-0472">Membrane</keyword>
<keyword id="KW-0479">Metal-binding</keyword>
<protein>
    <recommendedName>
        <fullName evidence="1">UDP-2,3-diacylglucosamine hydrolase</fullName>
        <ecNumber evidence="1">3.6.1.54</ecNumber>
    </recommendedName>
    <alternativeName>
        <fullName evidence="1">UDP-2,3-diacylglucosamine diphosphatase</fullName>
    </alternativeName>
</protein>